<keyword id="KW-1003">Cell membrane</keyword>
<keyword id="KW-0472">Membrane</keyword>
<keyword id="KW-0732">Signal</keyword>
<keyword id="KW-0812">Transmembrane</keyword>
<keyword id="KW-1133">Transmembrane helix</keyword>
<comment type="subcellular location">
    <subcellularLocation>
        <location evidence="3">Cell membrane</location>
        <topology evidence="3">Multi-pass membrane protein</topology>
    </subcellularLocation>
</comment>
<comment type="similarity">
    <text evidence="3">Belongs to the TrbL/VirB6 family.</text>
</comment>
<accession>Q1RH21</accession>
<name>Y1262_RICBR</name>
<gene>
    <name type="ordered locus">RBE_1262</name>
</gene>
<protein>
    <recommendedName>
        <fullName>Uncharacterized protein RBE_1262</fullName>
    </recommendedName>
</protein>
<evidence type="ECO:0000255" key="1"/>
<evidence type="ECO:0000256" key="2">
    <source>
        <dbReference type="SAM" id="MobiDB-lite"/>
    </source>
</evidence>
<evidence type="ECO:0000305" key="3"/>
<dbReference type="EMBL" id="CP000087">
    <property type="protein sequence ID" value="ABE05343.1"/>
    <property type="molecule type" value="Genomic_DNA"/>
</dbReference>
<dbReference type="RefSeq" id="WP_011477915.1">
    <property type="nucleotide sequence ID" value="NC_007940.1"/>
</dbReference>
<dbReference type="KEGG" id="rbe:RBE_1262"/>
<dbReference type="eggNOG" id="COG3704">
    <property type="taxonomic scope" value="Bacteria"/>
</dbReference>
<dbReference type="HOGENOM" id="CLU_327573_0_0_5"/>
<dbReference type="OrthoDB" id="7164976at2"/>
<dbReference type="Proteomes" id="UP000001951">
    <property type="component" value="Chromosome"/>
</dbReference>
<dbReference type="GO" id="GO:0005886">
    <property type="term" value="C:plasma membrane"/>
    <property type="evidence" value="ECO:0007669"/>
    <property type="project" value="UniProtKB-SubCell"/>
</dbReference>
<dbReference type="GO" id="GO:0030255">
    <property type="term" value="P:protein secretion by the type IV secretion system"/>
    <property type="evidence" value="ECO:0007669"/>
    <property type="project" value="InterPro"/>
</dbReference>
<dbReference type="InterPro" id="IPR007688">
    <property type="entry name" value="Conjugal_tfr_TrbL/VirB6"/>
</dbReference>
<dbReference type="Pfam" id="PF04610">
    <property type="entry name" value="TrbL"/>
    <property type="match status" value="1"/>
</dbReference>
<reference key="1">
    <citation type="journal article" date="2006" name="PLoS Genet.">
        <title>Genome sequence of Rickettsia bellii illuminates the role of amoebae in gene exchanges between intracellular pathogens.</title>
        <authorList>
            <person name="Ogata H."/>
            <person name="La Scola B."/>
            <person name="Audic S."/>
            <person name="Renesto P."/>
            <person name="Blanc G."/>
            <person name="Robert C."/>
            <person name="Fournier P.-E."/>
            <person name="Claverie J.-M."/>
            <person name="Raoult D."/>
        </authorList>
    </citation>
    <scope>NUCLEOTIDE SEQUENCE [LARGE SCALE GENOMIC DNA]</scope>
    <source>
        <strain>RML369-C</strain>
    </source>
</reference>
<sequence>MKIIKSLILLVLFMASPAKGDDFAWMSSGLSGLKSIFGCLEVPTFTSFQEGKIGISLSTAGDWQSTGNAVEKGKLLKIKWSTAGLTPEPRKYLVLYRIDPRFSVPQVFIKTYNYKNSQFEVAGFPGFSTANDGVIPPDKNLDALSFTKMNNYVNYFNYANGNPKIQVNVGDIVNISLADKDDFFNPSTSKTPSTLNNILAKELDSSVFAASALYTESNLGNFENRIVYSSAEQVCNIIDAQRATLCTGTGSATKYTNVSNGALVGKPMAVTTLQNFMSMINSCPANSNLNANPSCYYDQGRGMVIKIGGQVIKNRDQSFVNNDNTQNGFMYYQATSGGAMDFSSDWQPTGMFNNSFSMSDWSRNFSNYTDFATYITNGNWATNFLYFGRYAMIVEIGNGTNTISPGDQKNITLEYLITADGTLPSSSTPGTTVGYDFSGDAPQDGYLWLRVKNPNSNIQGTISVDYANYTGTTWFSNIVYNGAIKPITDQFRTYSEDFYFKLVANSAIQNIAKTALTLYVTIFGLMFVLGALKLTAVEVVTRIFKITIVAILLRPESWSFFNNNFFSAFINGIDFFATNVVGATSSKSNIFGFIDPIFDKYTNGRIWGLLFIQLLQIHNGLAFIVIITIYSLITYFRAVLEVIIGYVIAFIGLTVMISLAPFFIILMLFEKTKTMFNNWISILFSYVVQPTILLIFFLLIDQILSEQLLKVIVRACWDTLIPIKIGLDLSNLGIPLNFSFTLPFLPGIPFFVPQVPDITSSNILTNDTNTFLVLFTTALLFYSYCLMSYGLVSFVTIVVGMLTQVTPARIEGNYQAPSNPTESIMKDIGSVAAPIKKAALAPARIFKDKVIDQNYEARKPQGGGEHTGKFFQNRNDVKPEQTERND</sequence>
<proteinExistence type="inferred from homology"/>
<feature type="signal peptide" evidence="1">
    <location>
        <begin position="1"/>
        <end position="20"/>
    </location>
</feature>
<feature type="chain" id="PRO_0000269222" description="Uncharacterized protein RBE_1262">
    <location>
        <begin position="21"/>
        <end position="886"/>
    </location>
</feature>
<feature type="transmembrane region" description="Helical" evidence="1">
    <location>
        <begin position="520"/>
        <end position="540"/>
    </location>
</feature>
<feature type="transmembrane region" description="Helical" evidence="1">
    <location>
        <begin position="609"/>
        <end position="629"/>
    </location>
</feature>
<feature type="transmembrane region" description="Helical" evidence="1">
    <location>
        <begin position="647"/>
        <end position="667"/>
    </location>
</feature>
<feature type="transmembrane region" description="Helical" evidence="1">
    <location>
        <begin position="680"/>
        <end position="700"/>
    </location>
</feature>
<feature type="transmembrane region" description="Helical" evidence="1">
    <location>
        <begin position="779"/>
        <end position="799"/>
    </location>
</feature>
<feature type="region of interest" description="Disordered" evidence="2">
    <location>
        <begin position="856"/>
        <end position="886"/>
    </location>
</feature>
<feature type="compositionally biased region" description="Basic and acidic residues" evidence="2">
    <location>
        <begin position="875"/>
        <end position="886"/>
    </location>
</feature>
<organism>
    <name type="scientific">Rickettsia bellii (strain RML369-C)</name>
    <dbReference type="NCBI Taxonomy" id="336407"/>
    <lineage>
        <taxon>Bacteria</taxon>
        <taxon>Pseudomonadati</taxon>
        <taxon>Pseudomonadota</taxon>
        <taxon>Alphaproteobacteria</taxon>
        <taxon>Rickettsiales</taxon>
        <taxon>Rickettsiaceae</taxon>
        <taxon>Rickettsieae</taxon>
        <taxon>Rickettsia</taxon>
        <taxon>belli group</taxon>
    </lineage>
</organism>